<feature type="chain" id="PRO_0000210892" description="Acyl-homoserine-lactone synthase">
    <location>
        <begin position="1"/>
        <end position="226"/>
    </location>
</feature>
<gene>
    <name type="primary">psyI</name>
</gene>
<reference key="1">
    <citation type="submission" date="1995-10" db="EMBL/GenBank/DDBJ databases">
        <authorList>
            <person name="Chen Y.C."/>
            <person name="Shaw P.D."/>
        </authorList>
    </citation>
    <scope>NUCLEOTIDE SEQUENCE [GENOMIC DNA]</scope>
    <source>
        <strain>PTBR2.024</strain>
    </source>
</reference>
<dbReference type="EC" id="2.3.1.184"/>
<dbReference type="EMBL" id="AF110468">
    <property type="protein sequence ID" value="AAA82063.1"/>
    <property type="molecule type" value="Genomic_DNA"/>
</dbReference>
<dbReference type="RefSeq" id="WP_005782177.1">
    <property type="nucleotide sequence ID" value="NZ_QPDZ01000036.1"/>
</dbReference>
<dbReference type="SMR" id="P52990"/>
<dbReference type="GO" id="GO:0061579">
    <property type="term" value="F:N-acyl homoserine lactone synthase activity"/>
    <property type="evidence" value="ECO:0007669"/>
    <property type="project" value="UniProtKB-EC"/>
</dbReference>
<dbReference type="GO" id="GO:0009372">
    <property type="term" value="P:quorum sensing"/>
    <property type="evidence" value="ECO:0007669"/>
    <property type="project" value="UniProtKB-KW"/>
</dbReference>
<dbReference type="GO" id="GO:0007165">
    <property type="term" value="P:signal transduction"/>
    <property type="evidence" value="ECO:0007669"/>
    <property type="project" value="TreeGrafter"/>
</dbReference>
<dbReference type="Gene3D" id="3.40.630.30">
    <property type="match status" value="1"/>
</dbReference>
<dbReference type="InterPro" id="IPR016181">
    <property type="entry name" value="Acyl_CoA_acyltransferase"/>
</dbReference>
<dbReference type="InterPro" id="IPR018311">
    <property type="entry name" value="Autoind_synth_CS"/>
</dbReference>
<dbReference type="InterPro" id="IPR001690">
    <property type="entry name" value="Autoind_synthase"/>
</dbReference>
<dbReference type="PANTHER" id="PTHR39322">
    <property type="entry name" value="ACYL-HOMOSERINE-LACTONE SYNTHASE"/>
    <property type="match status" value="1"/>
</dbReference>
<dbReference type="PANTHER" id="PTHR39322:SF1">
    <property type="entry name" value="ISOVALERYL-HOMOSERINE LACTONE SYNTHASE"/>
    <property type="match status" value="1"/>
</dbReference>
<dbReference type="Pfam" id="PF00765">
    <property type="entry name" value="Autoind_synth"/>
    <property type="match status" value="1"/>
</dbReference>
<dbReference type="PRINTS" id="PR01549">
    <property type="entry name" value="AUTOINDCRSYN"/>
</dbReference>
<dbReference type="SUPFAM" id="SSF55729">
    <property type="entry name" value="Acyl-CoA N-acyltransferases (Nat)"/>
    <property type="match status" value="1"/>
</dbReference>
<dbReference type="PROSITE" id="PS00949">
    <property type="entry name" value="AUTOINDUCER_SYNTH_1"/>
    <property type="match status" value="1"/>
</dbReference>
<dbReference type="PROSITE" id="PS51187">
    <property type="entry name" value="AUTOINDUCER_SYNTH_2"/>
    <property type="match status" value="1"/>
</dbReference>
<comment type="function">
    <text>Required for the synthesis of OHHL (N-(3-oxohexanoyl)-L-homoserine lactone), an autoinducer molecule.</text>
</comment>
<comment type="catalytic activity">
    <reaction>
        <text>a fatty acyl-[ACP] + S-adenosyl-L-methionine = an N-acyl-L-homoserine lactone + S-methyl-5'-thioadenosine + holo-[ACP] + H(+)</text>
        <dbReference type="Rhea" id="RHEA:10096"/>
        <dbReference type="Rhea" id="RHEA-COMP:9685"/>
        <dbReference type="Rhea" id="RHEA-COMP:14125"/>
        <dbReference type="ChEBI" id="CHEBI:15378"/>
        <dbReference type="ChEBI" id="CHEBI:17509"/>
        <dbReference type="ChEBI" id="CHEBI:55474"/>
        <dbReference type="ChEBI" id="CHEBI:59789"/>
        <dbReference type="ChEBI" id="CHEBI:64479"/>
        <dbReference type="ChEBI" id="CHEBI:138651"/>
        <dbReference type="EC" id="2.3.1.184"/>
    </reaction>
</comment>
<comment type="similarity">
    <text evidence="1">Belongs to the autoinducer synthase family.</text>
</comment>
<name>PSYI_PSEAJ</name>
<protein>
    <recommendedName>
        <fullName>Acyl-homoserine-lactone synthase</fullName>
        <ecNumber>2.3.1.184</ecNumber>
    </recommendedName>
    <alternativeName>
        <fullName>Autoinducer synthesis protein PsyI</fullName>
    </alternativeName>
</protein>
<accession>P52990</accession>
<proteinExistence type="inferred from homology"/>
<keyword id="KW-0071">Autoinducer synthesis</keyword>
<keyword id="KW-0673">Quorum sensing</keyword>
<keyword id="KW-0949">S-adenosyl-L-methionine</keyword>
<keyword id="KW-0808">Transferase</keyword>
<evidence type="ECO:0000255" key="1">
    <source>
        <dbReference type="PROSITE-ProRule" id="PRU00533"/>
    </source>
</evidence>
<sequence length="226" mass="24946">MSSGFEFQLASYTTMPVTLLETLYSMRKKIFSDRLEWKVRVSHAFEFDEYDNAATTYLVGSWNGVPLAGLRLINTCDPYMLEGPFRSFFDCPAPKNAAMAESSRFFVDTARARSLGILHAPLTEMLLFSMHNHAALSGLQSIITVVSKAMARIVRKSGWEHHVLSTGEASPGETVLLLEMPVTADNHQRLLGNIALRQPVTDDLLRWPIALGVSGSAPQACMHSAA</sequence>
<organism>
    <name type="scientific">Pseudomonas amygdali pv. tabaci</name>
    <name type="common">Pseudomonas syringae pv. tabaci</name>
    <dbReference type="NCBI Taxonomy" id="322"/>
    <lineage>
        <taxon>Bacteria</taxon>
        <taxon>Pseudomonadati</taxon>
        <taxon>Pseudomonadota</taxon>
        <taxon>Gammaproteobacteria</taxon>
        <taxon>Pseudomonadales</taxon>
        <taxon>Pseudomonadaceae</taxon>
        <taxon>Pseudomonas</taxon>
        <taxon>Pseudomonas amygdali</taxon>
    </lineage>
</organism>